<name>M1_I36A0</name>
<keyword id="KW-0025">Alternative splicing</keyword>
<keyword id="KW-1048">Host nucleus</keyword>
<keyword id="KW-0472">Membrane</keyword>
<keyword id="KW-0694">RNA-binding</keyword>
<keyword id="KW-0468">Viral matrix protein</keyword>
<keyword id="KW-0946">Virion</keyword>
<sequence>MSLLTEVETYVLSIIPSGPLKAEIAQRLEDVFAGKNTDLEALMEWLKTRPILSPLTKGILGFVFTLTVPSERGLQRRRFVQNALNGNGDPNNMDKAVKLYRKLKREITFHGAKEISLSYSAGALASCMGLIYNRMGAVTTEVAFGLVCATCEQIADSQHRSHRQMVTTTNPLIRHENRMVLASTTAKAMEQMAGSSEQAAEAMEVASQARQMVQAMRTIGTHPSSSAGLKNDLLENLQAYQKRMGVQMQRFK</sequence>
<reference key="1">
    <citation type="submission" date="2007-03" db="EMBL/GenBank/DDBJ databases">
        <title>The NIAID influenza genome sequencing project.</title>
        <authorList>
            <person name="Ghedin E."/>
            <person name="Spiro D."/>
            <person name="Miller N."/>
            <person name="Zaborsky J."/>
            <person name="Feldblyum T."/>
            <person name="Subbu V."/>
            <person name="Shumway M."/>
            <person name="Sparenborg J."/>
            <person name="Groveman L."/>
            <person name="Halpin R."/>
            <person name="Sitz J."/>
            <person name="Koo H."/>
            <person name="Salzberg S.L."/>
            <person name="Webster R.G."/>
            <person name="Hoffmann E."/>
            <person name="Krauss S."/>
            <person name="Naeve C."/>
            <person name="Bao Y."/>
            <person name="Bolotov P."/>
            <person name="Dernovoy D."/>
            <person name="Kiryutin B."/>
            <person name="Lipman D.J."/>
            <person name="Tatusova T."/>
        </authorList>
    </citation>
    <scope>NUCLEOTIDE SEQUENCE [GENOMIC RNA]</scope>
</reference>
<reference key="2">
    <citation type="submission" date="2007-03" db="EMBL/GenBank/DDBJ databases">
        <authorList>
            <consortium name="The NIAID Influenza Genome Sequencing Consortium"/>
        </authorList>
    </citation>
    <scope>NUCLEOTIDE SEQUENCE [GENOMIC RNA]</scope>
</reference>
<protein>
    <recommendedName>
        <fullName evidence="1">Matrix protein 1</fullName>
        <shortName evidence="1">M1</shortName>
    </recommendedName>
</protein>
<organismHost>
    <name type="scientific">Aves</name>
    <dbReference type="NCBI Taxonomy" id="8782"/>
</organismHost>
<organismHost>
    <name type="scientific">Homo sapiens</name>
    <name type="common">Human</name>
    <dbReference type="NCBI Taxonomy" id="9606"/>
</organismHost>
<organismHost>
    <name type="scientific">Sus scrofa</name>
    <name type="common">Pig</name>
    <dbReference type="NCBI Taxonomy" id="9823"/>
</organismHost>
<comment type="function">
    <text evidence="1">Plays critical roles in virus replication, from virus entry and uncoating to assembly and budding of the virus particle. M1 binding to ribonucleocapsids (RNPs) in nucleus seems to inhibit viral transcription. Interaction of viral NEP with M1-RNP is thought to promote nuclear export of the complex, which is targeted to the virion assembly site at the apical plasma membrane in polarized epithelial cells. Interactions with NA and HA may bring M1, a non-raft-associated protein, into lipid rafts. Forms a continuous shell on the inner side of the lipid bilayer in virion, where it binds the RNP. During virus entry into cell, the M2 ion channel acidifies the internal virion core, inducing M1 dissociation from the RNP. M1-free RNPs are transported to the nucleus, where viral transcription and replication can take place.</text>
</comment>
<comment type="function">
    <text evidence="1">Determines the virion's shape: spherical or filamentous. Clinical isolates of influenza are characterized by the presence of significant proportion of filamentous virions, whereas after multiple passage on eggs or cell culture, virions have only spherical morphology. Filamentous virions are thought to be important to infect neighboring cells, and spherical virions more suited to spread through aerosol between hosts organisms.</text>
</comment>
<comment type="subunit">
    <text evidence="1">Homodimer and homomultimer. Interacts with NEP. Binds ribonucleocapsid by both interacting with genomic RNA and NP protein. May interact with HA and NA. Cannot bind NP without genomic RNA.</text>
</comment>
<comment type="subcellular location">
    <subcellularLocation>
        <location evidence="1">Virion membrane</location>
        <topology evidence="1">Peripheral membrane protein</topology>
        <orientation evidence="1">Cytoplasmic side</orientation>
    </subcellularLocation>
    <subcellularLocation>
        <location evidence="1">Host nucleus</location>
    </subcellularLocation>
</comment>
<comment type="alternative products">
    <event type="alternative splicing"/>
    <isoform>
        <id>A4GCI8-1</id>
        <name>M1</name>
        <sequence type="displayed"/>
    </isoform>
    <isoform>
        <id>A4GCI7-1</id>
        <name>M2</name>
        <sequence type="external"/>
    </isoform>
    <text>Only the first 9 residues are shared by the 2 isoforms.</text>
</comment>
<comment type="miscellaneous">
    <text evidence="1">Most abundant protein in virion. When expressed alone can form virus-like particles in transfected cells.</text>
</comment>
<comment type="similarity">
    <text evidence="1">Belongs to the influenza viruses Matrix protein M1 family.</text>
</comment>
<gene>
    <name evidence="1" type="primary">M</name>
</gene>
<organism>
    <name type="scientific">Influenza A virus (strain A/Henry/1936 H1N1)</name>
    <dbReference type="NCBI Taxonomy" id="425562"/>
    <lineage>
        <taxon>Viruses</taxon>
        <taxon>Riboviria</taxon>
        <taxon>Orthornavirae</taxon>
        <taxon>Negarnaviricota</taxon>
        <taxon>Polyploviricotina</taxon>
        <taxon>Insthoviricetes</taxon>
        <taxon>Articulavirales</taxon>
        <taxon>Orthomyxoviridae</taxon>
        <taxon>Alphainfluenzavirus</taxon>
        <taxon>Alphainfluenzavirus influenzae</taxon>
        <taxon>Influenza A virus</taxon>
    </lineage>
</organism>
<proteinExistence type="inferred from homology"/>
<dbReference type="EMBL" id="CY020446">
    <property type="protein sequence ID" value="ABO38352.1"/>
    <property type="molecule type" value="Viral_cRNA"/>
</dbReference>
<dbReference type="SMR" id="A4GCI8"/>
<dbReference type="Proteomes" id="UP000008213">
    <property type="component" value="Genome"/>
</dbReference>
<dbReference type="GO" id="GO:0042025">
    <property type="term" value="C:host cell nucleus"/>
    <property type="evidence" value="ECO:0007669"/>
    <property type="project" value="UniProtKB-SubCell"/>
</dbReference>
<dbReference type="GO" id="GO:0016020">
    <property type="term" value="C:membrane"/>
    <property type="evidence" value="ECO:0007669"/>
    <property type="project" value="UniProtKB-KW"/>
</dbReference>
<dbReference type="GO" id="GO:0055036">
    <property type="term" value="C:virion membrane"/>
    <property type="evidence" value="ECO:0007669"/>
    <property type="project" value="UniProtKB-SubCell"/>
</dbReference>
<dbReference type="GO" id="GO:0003723">
    <property type="term" value="F:RNA binding"/>
    <property type="evidence" value="ECO:0007669"/>
    <property type="project" value="UniProtKB-UniRule"/>
</dbReference>
<dbReference type="GO" id="GO:0039660">
    <property type="term" value="F:structural constituent of virion"/>
    <property type="evidence" value="ECO:0007669"/>
    <property type="project" value="UniProtKB-UniRule"/>
</dbReference>
<dbReference type="GO" id="GO:0046761">
    <property type="term" value="P:viral budding from plasma membrane"/>
    <property type="evidence" value="ECO:0007669"/>
    <property type="project" value="UniProtKB-UniRule"/>
</dbReference>
<dbReference type="FunFam" id="1.10.10.180:FF:000001">
    <property type="entry name" value="Matrix protein 1"/>
    <property type="match status" value="1"/>
</dbReference>
<dbReference type="FunFam" id="1.20.91.10:FF:000001">
    <property type="entry name" value="Matrix protein 1"/>
    <property type="match status" value="1"/>
</dbReference>
<dbReference type="Gene3D" id="1.10.10.180">
    <property type="match status" value="1"/>
</dbReference>
<dbReference type="Gene3D" id="1.20.91.10">
    <property type="match status" value="1"/>
</dbReference>
<dbReference type="HAMAP" id="MF_04068">
    <property type="entry name" value="INFV_M1"/>
    <property type="match status" value="1"/>
</dbReference>
<dbReference type="InterPro" id="IPR036039">
    <property type="entry name" value="Flu_matrix_M1"/>
</dbReference>
<dbReference type="InterPro" id="IPR013188">
    <property type="entry name" value="Flu_matrix_M1_C"/>
</dbReference>
<dbReference type="InterPro" id="IPR001561">
    <property type="entry name" value="Flu_matrix_M1_N"/>
</dbReference>
<dbReference type="InterPro" id="IPR015423">
    <property type="entry name" value="Flu_matrix_M1_N_sub1"/>
</dbReference>
<dbReference type="InterPro" id="IPR015799">
    <property type="entry name" value="Flu_matrix_M1_N_sub2"/>
</dbReference>
<dbReference type="InterPro" id="IPR037533">
    <property type="entry name" value="INFV_M1"/>
</dbReference>
<dbReference type="Pfam" id="PF00598">
    <property type="entry name" value="Flu_M1"/>
    <property type="match status" value="1"/>
</dbReference>
<dbReference type="Pfam" id="PF08289">
    <property type="entry name" value="Flu_M1_C"/>
    <property type="match status" value="1"/>
</dbReference>
<dbReference type="SMART" id="SM00759">
    <property type="entry name" value="Flu_M1_C"/>
    <property type="match status" value="1"/>
</dbReference>
<dbReference type="SUPFAM" id="SSF48145">
    <property type="entry name" value="Influenza virus matrix protein M1"/>
    <property type="match status" value="1"/>
</dbReference>
<feature type="chain" id="PRO_0000372903" description="Matrix protein 1">
    <location>
        <begin position="1"/>
        <end position="252"/>
    </location>
</feature>
<feature type="region of interest" description="Membrane-binding" evidence="1">
    <location>
        <begin position="1"/>
        <end position="164"/>
    </location>
</feature>
<feature type="region of interest" description="RNP-binding" evidence="1">
    <location>
        <begin position="165"/>
        <end position="252"/>
    </location>
</feature>
<feature type="short sequence motif" description="Nuclear localization signal" evidence="1">
    <location>
        <begin position="101"/>
        <end position="105"/>
    </location>
</feature>
<accession>A4GCI8</accession>
<evidence type="ECO:0000255" key="1">
    <source>
        <dbReference type="HAMAP-Rule" id="MF_04068"/>
    </source>
</evidence>